<sequence length="69" mass="7860">MPSAIKGVMVQCDPSIKALILKIDSERHDIVIEELDETHLVIDSNKVQAVKNELNRLLSKNIYNPFDEQ</sequence>
<reference key="1">
    <citation type="journal article" date="2004" name="Nature">
        <title>Genome evolution in yeasts.</title>
        <authorList>
            <person name="Dujon B."/>
            <person name="Sherman D."/>
            <person name="Fischer G."/>
            <person name="Durrens P."/>
            <person name="Casaregola S."/>
            <person name="Lafontaine I."/>
            <person name="de Montigny J."/>
            <person name="Marck C."/>
            <person name="Neuveglise C."/>
            <person name="Talla E."/>
            <person name="Goffard N."/>
            <person name="Frangeul L."/>
            <person name="Aigle M."/>
            <person name="Anthouard V."/>
            <person name="Babour A."/>
            <person name="Barbe V."/>
            <person name="Barnay S."/>
            <person name="Blanchin S."/>
            <person name="Beckerich J.-M."/>
            <person name="Beyne E."/>
            <person name="Bleykasten C."/>
            <person name="Boisrame A."/>
            <person name="Boyer J."/>
            <person name="Cattolico L."/>
            <person name="Confanioleri F."/>
            <person name="de Daruvar A."/>
            <person name="Despons L."/>
            <person name="Fabre E."/>
            <person name="Fairhead C."/>
            <person name="Ferry-Dumazet H."/>
            <person name="Groppi A."/>
            <person name="Hantraye F."/>
            <person name="Hennequin C."/>
            <person name="Jauniaux N."/>
            <person name="Joyet P."/>
            <person name="Kachouri R."/>
            <person name="Kerrest A."/>
            <person name="Koszul R."/>
            <person name="Lemaire M."/>
            <person name="Lesur I."/>
            <person name="Ma L."/>
            <person name="Muller H."/>
            <person name="Nicaud J.-M."/>
            <person name="Nikolski M."/>
            <person name="Oztas S."/>
            <person name="Ozier-Kalogeropoulos O."/>
            <person name="Pellenz S."/>
            <person name="Potier S."/>
            <person name="Richard G.-F."/>
            <person name="Straub M.-L."/>
            <person name="Suleau A."/>
            <person name="Swennen D."/>
            <person name="Tekaia F."/>
            <person name="Wesolowski-Louvel M."/>
            <person name="Westhof E."/>
            <person name="Wirth B."/>
            <person name="Zeniou-Meyer M."/>
            <person name="Zivanovic Y."/>
            <person name="Bolotin-Fukuhara M."/>
            <person name="Thierry A."/>
            <person name="Bouchier C."/>
            <person name="Caudron B."/>
            <person name="Scarpelli C."/>
            <person name="Gaillardin C."/>
            <person name="Weissenbach J."/>
            <person name="Wincker P."/>
            <person name="Souciet J.-L."/>
        </authorList>
    </citation>
    <scope>NUCLEOTIDE SEQUENCE [LARGE SCALE GENOMIC DNA]</scope>
    <source>
        <strain>ATCC 36239 / CBS 767 / BCRC 21394 / JCM 1990 / NBRC 0083 / IGC 2968</strain>
    </source>
</reference>
<evidence type="ECO:0000250" key="1"/>
<evidence type="ECO:0000250" key="2">
    <source>
        <dbReference type="UniProtKB" id="Q3E7C1"/>
    </source>
</evidence>
<evidence type="ECO:0000305" key="3"/>
<protein>
    <recommendedName>
        <fullName>General transcription and DNA repair factor IIH subunit TFB5</fullName>
        <shortName>TFIIH subunit TFB5</shortName>
    </recommendedName>
    <alternativeName>
        <fullName>RNA polymerase II transcription factor B subunit 5</fullName>
    </alternativeName>
</protein>
<accession>Q6BVH4</accession>
<keyword id="KW-0227">DNA damage</keyword>
<keyword id="KW-0234">DNA repair</keyword>
<keyword id="KW-0539">Nucleus</keyword>
<keyword id="KW-1185">Reference proteome</keyword>
<keyword id="KW-0804">Transcription</keyword>
<keyword id="KW-0805">Transcription regulation</keyword>
<comment type="function">
    <text evidence="2">Component of the general transcription and DNA repair factor IIH (TFIIH) core complex, which is involved in general and transcription-coupled nucleotide excision repair (NER) of damaged DNA and, when complexed to TFIIK, in RNA transcription by RNA polymerase II. In NER, TFIIH acts by opening DNA around the lesion to allow the excision of the damaged oligonucleotide and its replacement by a new DNA fragment. In transcription, TFIIH has an essential role in transcription initiation. When the pre-initiation complex (PIC) has been established, TFIIH is required for promoter opening and promoter escape. Phosphorylation of the C-terminal tail (CTD) of the largest subunit of RNA polymerase II by the kinase module TFIIK controls the initiation of transcription.</text>
</comment>
<comment type="subunit">
    <text evidence="2">Component of the 7-subunit TFIIH core complex composed of XPB/SSL2, XPD/RAD3, SSL1, TFB1, TFB2, TFB4 and TFB5, which is active in NER. The core complex associates with the 3-subunit CTD-kinase module TFIIK composed of CCL1, KIN28 and TFB3 to form the 10-subunit holoenzyme (holo-TFIIH) active in transcription.</text>
</comment>
<comment type="subcellular location">
    <subcellularLocation>
        <location evidence="1">Nucleus</location>
    </subcellularLocation>
</comment>
<comment type="similarity">
    <text evidence="3">Belongs to the TFB5 family.</text>
</comment>
<dbReference type="EMBL" id="CR382135">
    <property type="protein sequence ID" value="CAG85835.2"/>
    <property type="molecule type" value="Genomic_DNA"/>
</dbReference>
<dbReference type="RefSeq" id="XP_457795.2">
    <property type="nucleotide sequence ID" value="XM_457795.1"/>
</dbReference>
<dbReference type="SMR" id="Q6BVH4"/>
<dbReference type="FunCoup" id="Q6BVH4">
    <property type="interactions" value="164"/>
</dbReference>
<dbReference type="STRING" id="284592.Q6BVH4"/>
<dbReference type="GeneID" id="2900788"/>
<dbReference type="KEGG" id="dha:DEHA2C02662g"/>
<dbReference type="VEuPathDB" id="FungiDB:DEHA2C02662g"/>
<dbReference type="eggNOG" id="KOG3451">
    <property type="taxonomic scope" value="Eukaryota"/>
</dbReference>
<dbReference type="HOGENOM" id="CLU_166246_3_2_1"/>
<dbReference type="InParanoid" id="Q6BVH4"/>
<dbReference type="OMA" id="IYNPMDE"/>
<dbReference type="OrthoDB" id="354at2759"/>
<dbReference type="Proteomes" id="UP000000599">
    <property type="component" value="Chromosome C"/>
</dbReference>
<dbReference type="GO" id="GO:0005829">
    <property type="term" value="C:cytosol"/>
    <property type="evidence" value="ECO:0007669"/>
    <property type="project" value="EnsemblFungi"/>
</dbReference>
<dbReference type="GO" id="GO:0000439">
    <property type="term" value="C:transcription factor TFIIH core complex"/>
    <property type="evidence" value="ECO:0007669"/>
    <property type="project" value="EnsemblFungi"/>
</dbReference>
<dbReference type="GO" id="GO:0005675">
    <property type="term" value="C:transcription factor TFIIH holo complex"/>
    <property type="evidence" value="ECO:0007669"/>
    <property type="project" value="EnsemblFungi"/>
</dbReference>
<dbReference type="GO" id="GO:0006294">
    <property type="term" value="P:nucleotide-excision repair, preincision complex assembly"/>
    <property type="evidence" value="ECO:0007669"/>
    <property type="project" value="TreeGrafter"/>
</dbReference>
<dbReference type="GO" id="GO:0006367">
    <property type="term" value="P:transcription initiation at RNA polymerase II promoter"/>
    <property type="evidence" value="ECO:0007669"/>
    <property type="project" value="EnsemblFungi"/>
</dbReference>
<dbReference type="FunFam" id="3.30.70.1220:FF:000002">
    <property type="entry name" value="RNA polymerase II transcription factor B subunit 5"/>
    <property type="match status" value="1"/>
</dbReference>
<dbReference type="Gene3D" id="3.30.70.1220">
    <property type="entry name" value="TFB5-like"/>
    <property type="match status" value="1"/>
</dbReference>
<dbReference type="InterPro" id="IPR035935">
    <property type="entry name" value="TFB5-like_sf"/>
</dbReference>
<dbReference type="InterPro" id="IPR009400">
    <property type="entry name" value="TFIIH_TTDA/Tfb5"/>
</dbReference>
<dbReference type="PANTHER" id="PTHR28580">
    <property type="entry name" value="GENERAL TRANSCRIPTION FACTOR IIH SUBUNIT 5"/>
    <property type="match status" value="1"/>
</dbReference>
<dbReference type="PANTHER" id="PTHR28580:SF1">
    <property type="entry name" value="GENERAL TRANSCRIPTION FACTOR IIH SUBUNIT 5"/>
    <property type="match status" value="1"/>
</dbReference>
<dbReference type="Pfam" id="PF06331">
    <property type="entry name" value="Tfb5"/>
    <property type="match status" value="1"/>
</dbReference>
<dbReference type="SMART" id="SM01395">
    <property type="entry name" value="Tbf5"/>
    <property type="match status" value="1"/>
</dbReference>
<dbReference type="SUPFAM" id="SSF142897">
    <property type="entry name" value="TFB5-like"/>
    <property type="match status" value="1"/>
</dbReference>
<name>TFB5_DEBHA</name>
<feature type="chain" id="PRO_0000119280" description="General transcription and DNA repair factor IIH subunit TFB5">
    <location>
        <begin position="1"/>
        <end position="69"/>
    </location>
</feature>
<proteinExistence type="inferred from homology"/>
<organism>
    <name type="scientific">Debaryomyces hansenii (strain ATCC 36239 / CBS 767 / BCRC 21394 / JCM 1990 / NBRC 0083 / IGC 2968)</name>
    <name type="common">Yeast</name>
    <name type="synonym">Torulaspora hansenii</name>
    <dbReference type="NCBI Taxonomy" id="284592"/>
    <lineage>
        <taxon>Eukaryota</taxon>
        <taxon>Fungi</taxon>
        <taxon>Dikarya</taxon>
        <taxon>Ascomycota</taxon>
        <taxon>Saccharomycotina</taxon>
        <taxon>Pichiomycetes</taxon>
        <taxon>Debaryomycetaceae</taxon>
        <taxon>Debaryomyces</taxon>
    </lineage>
</organism>
<gene>
    <name type="primary">TFB5</name>
    <name type="ordered locus">DEHA2C02662g</name>
</gene>